<keyword id="KW-0002">3D-structure</keyword>
<keyword id="KW-0217">Developmental protein</keyword>
<keyword id="KW-0225">Disease variant</keyword>
<keyword id="KW-0238">DNA-binding</keyword>
<keyword id="KW-0371">Homeobox</keyword>
<keyword id="KW-0539">Nucleus</keyword>
<keyword id="KW-1267">Proteomics identification</keyword>
<keyword id="KW-1185">Reference proteome</keyword>
<keyword id="KW-0804">Transcription</keyword>
<keyword id="KW-0805">Transcription regulation</keyword>
<gene>
    <name type="primary">HOXB13</name>
</gene>
<reference key="1">
    <citation type="journal article" date="1996" name="Development">
        <title>Hoxb-13: a new Hox gene in a distant region of the HOXB cluster maintains colinearity.</title>
        <authorList>
            <person name="Zeltser L.M."/>
            <person name="Desplan C."/>
            <person name="Heintz N."/>
        </authorList>
    </citation>
    <scope>NUCLEOTIDE SEQUENCE [MRNA]</scope>
</reference>
<reference key="2">
    <citation type="journal article" date="1998" name="J. Invest. Dermatol.">
        <title>Modulation of the human homeobox genes PRX-2 and HOXB13 in scarless fetal wounds.</title>
        <authorList>
            <person name="Stelnicki E.J."/>
            <person name="Arbeit J."/>
            <person name="Cass D.L."/>
            <person name="Saner C."/>
            <person name="Harrison M."/>
            <person name="Largman C."/>
        </authorList>
    </citation>
    <scope>NUCLEOTIDE SEQUENCE [MRNA]</scope>
</reference>
<reference key="3">
    <citation type="submission" date="2003-05" db="EMBL/GenBank/DDBJ databases">
        <title>Cloning of human full-length CDSs in BD Creator(TM) system donor vector.</title>
        <authorList>
            <person name="Kalnine N."/>
            <person name="Chen X."/>
            <person name="Rolfs A."/>
            <person name="Halleck A."/>
            <person name="Hines L."/>
            <person name="Eisenstein S."/>
            <person name="Koundinya M."/>
            <person name="Raphael J."/>
            <person name="Moreira D."/>
            <person name="Kelley T."/>
            <person name="LaBaer J."/>
            <person name="Lin Y."/>
            <person name="Phelan M."/>
            <person name="Farmer A."/>
        </authorList>
    </citation>
    <scope>NUCLEOTIDE SEQUENCE [LARGE SCALE MRNA]</scope>
</reference>
<reference key="4">
    <citation type="journal article" date="2004" name="Nat. Genet.">
        <title>Complete sequencing and characterization of 21,243 full-length human cDNAs.</title>
        <authorList>
            <person name="Ota T."/>
            <person name="Suzuki Y."/>
            <person name="Nishikawa T."/>
            <person name="Otsuki T."/>
            <person name="Sugiyama T."/>
            <person name="Irie R."/>
            <person name="Wakamatsu A."/>
            <person name="Hayashi K."/>
            <person name="Sato H."/>
            <person name="Nagai K."/>
            <person name="Kimura K."/>
            <person name="Makita H."/>
            <person name="Sekine M."/>
            <person name="Obayashi M."/>
            <person name="Nishi T."/>
            <person name="Shibahara T."/>
            <person name="Tanaka T."/>
            <person name="Ishii S."/>
            <person name="Yamamoto J."/>
            <person name="Saito K."/>
            <person name="Kawai Y."/>
            <person name="Isono Y."/>
            <person name="Nakamura Y."/>
            <person name="Nagahari K."/>
            <person name="Murakami K."/>
            <person name="Yasuda T."/>
            <person name="Iwayanagi T."/>
            <person name="Wagatsuma M."/>
            <person name="Shiratori A."/>
            <person name="Sudo H."/>
            <person name="Hosoiri T."/>
            <person name="Kaku Y."/>
            <person name="Kodaira H."/>
            <person name="Kondo H."/>
            <person name="Sugawara M."/>
            <person name="Takahashi M."/>
            <person name="Kanda K."/>
            <person name="Yokoi T."/>
            <person name="Furuya T."/>
            <person name="Kikkawa E."/>
            <person name="Omura Y."/>
            <person name="Abe K."/>
            <person name="Kamihara K."/>
            <person name="Katsuta N."/>
            <person name="Sato K."/>
            <person name="Tanikawa M."/>
            <person name="Yamazaki M."/>
            <person name="Ninomiya K."/>
            <person name="Ishibashi T."/>
            <person name="Yamashita H."/>
            <person name="Murakawa K."/>
            <person name="Fujimori K."/>
            <person name="Tanai H."/>
            <person name="Kimata M."/>
            <person name="Watanabe M."/>
            <person name="Hiraoka S."/>
            <person name="Chiba Y."/>
            <person name="Ishida S."/>
            <person name="Ono Y."/>
            <person name="Takiguchi S."/>
            <person name="Watanabe S."/>
            <person name="Yosida M."/>
            <person name="Hotuta T."/>
            <person name="Kusano J."/>
            <person name="Kanehori K."/>
            <person name="Takahashi-Fujii A."/>
            <person name="Hara H."/>
            <person name="Tanase T.-O."/>
            <person name="Nomura Y."/>
            <person name="Togiya S."/>
            <person name="Komai F."/>
            <person name="Hara R."/>
            <person name="Takeuchi K."/>
            <person name="Arita M."/>
            <person name="Imose N."/>
            <person name="Musashino K."/>
            <person name="Yuuki H."/>
            <person name="Oshima A."/>
            <person name="Sasaki N."/>
            <person name="Aotsuka S."/>
            <person name="Yoshikawa Y."/>
            <person name="Matsunawa H."/>
            <person name="Ichihara T."/>
            <person name="Shiohata N."/>
            <person name="Sano S."/>
            <person name="Moriya S."/>
            <person name="Momiyama H."/>
            <person name="Satoh N."/>
            <person name="Takami S."/>
            <person name="Terashima Y."/>
            <person name="Suzuki O."/>
            <person name="Nakagawa S."/>
            <person name="Senoh A."/>
            <person name="Mizoguchi H."/>
            <person name="Goto Y."/>
            <person name="Shimizu F."/>
            <person name="Wakebe H."/>
            <person name="Hishigaki H."/>
            <person name="Watanabe T."/>
            <person name="Sugiyama A."/>
            <person name="Takemoto M."/>
            <person name="Kawakami B."/>
            <person name="Yamazaki M."/>
            <person name="Watanabe K."/>
            <person name="Kumagai A."/>
            <person name="Itakura S."/>
            <person name="Fukuzumi Y."/>
            <person name="Fujimori Y."/>
            <person name="Komiyama M."/>
            <person name="Tashiro H."/>
            <person name="Tanigami A."/>
            <person name="Fujiwara T."/>
            <person name="Ono T."/>
            <person name="Yamada K."/>
            <person name="Fujii Y."/>
            <person name="Ozaki K."/>
            <person name="Hirao M."/>
            <person name="Ohmori Y."/>
            <person name="Kawabata A."/>
            <person name="Hikiji T."/>
            <person name="Kobatake N."/>
            <person name="Inagaki H."/>
            <person name="Ikema Y."/>
            <person name="Okamoto S."/>
            <person name="Okitani R."/>
            <person name="Kawakami T."/>
            <person name="Noguchi S."/>
            <person name="Itoh T."/>
            <person name="Shigeta K."/>
            <person name="Senba T."/>
            <person name="Matsumura K."/>
            <person name="Nakajima Y."/>
            <person name="Mizuno T."/>
            <person name="Morinaga M."/>
            <person name="Sasaki M."/>
            <person name="Togashi T."/>
            <person name="Oyama M."/>
            <person name="Hata H."/>
            <person name="Watanabe M."/>
            <person name="Komatsu T."/>
            <person name="Mizushima-Sugano J."/>
            <person name="Satoh T."/>
            <person name="Shirai Y."/>
            <person name="Takahashi Y."/>
            <person name="Nakagawa K."/>
            <person name="Okumura K."/>
            <person name="Nagase T."/>
            <person name="Nomura N."/>
            <person name="Kikuchi H."/>
            <person name="Masuho Y."/>
            <person name="Yamashita R."/>
            <person name="Nakai K."/>
            <person name="Yada T."/>
            <person name="Nakamura Y."/>
            <person name="Ohara O."/>
            <person name="Isogai T."/>
            <person name="Sugano S."/>
        </authorList>
    </citation>
    <scope>NUCLEOTIDE SEQUENCE [LARGE SCALE MRNA]</scope>
    <source>
        <tissue>Prostate</tissue>
    </source>
</reference>
<reference key="5">
    <citation type="submission" date="2005-09" db="EMBL/GenBank/DDBJ databases">
        <authorList>
            <person name="Mural R.J."/>
            <person name="Istrail S."/>
            <person name="Sutton G.G."/>
            <person name="Florea L."/>
            <person name="Halpern A.L."/>
            <person name="Mobarry C.M."/>
            <person name="Lippert R."/>
            <person name="Walenz B."/>
            <person name="Shatkay H."/>
            <person name="Dew I."/>
            <person name="Miller J.R."/>
            <person name="Flanigan M.J."/>
            <person name="Edwards N.J."/>
            <person name="Bolanos R."/>
            <person name="Fasulo D."/>
            <person name="Halldorsson B.V."/>
            <person name="Hannenhalli S."/>
            <person name="Turner R."/>
            <person name="Yooseph S."/>
            <person name="Lu F."/>
            <person name="Nusskern D.R."/>
            <person name="Shue B.C."/>
            <person name="Zheng X.H."/>
            <person name="Zhong F."/>
            <person name="Delcher A.L."/>
            <person name="Huson D.H."/>
            <person name="Kravitz S.A."/>
            <person name="Mouchard L."/>
            <person name="Reinert K."/>
            <person name="Remington K.A."/>
            <person name="Clark A.G."/>
            <person name="Waterman M.S."/>
            <person name="Eichler E.E."/>
            <person name="Adams M.D."/>
            <person name="Hunkapiller M.W."/>
            <person name="Myers E.W."/>
            <person name="Venter J.C."/>
        </authorList>
    </citation>
    <scope>NUCLEOTIDE SEQUENCE [LARGE SCALE GENOMIC DNA]</scope>
</reference>
<reference key="6">
    <citation type="journal article" date="2004" name="Genome Res.">
        <title>The status, quality, and expansion of the NIH full-length cDNA project: the Mammalian Gene Collection (MGC).</title>
        <authorList>
            <consortium name="The MGC Project Team"/>
        </authorList>
    </citation>
    <scope>NUCLEOTIDE SEQUENCE [LARGE SCALE MRNA]</scope>
    <source>
        <tissue>Prostate</tissue>
    </source>
</reference>
<reference evidence="14" key="7">
    <citation type="submission" date="2005-11" db="PDB data bank">
        <title>Solution structure of the homeobox domain of human homeo box B13.</title>
        <authorList>
            <consortium name="RIKEN structural genomics initiative (RSGI)"/>
        </authorList>
    </citation>
    <scope>STRUCTURE BY NMR OF 217-273</scope>
</reference>
<reference evidence="15 16 18" key="8">
    <citation type="submission" date="2015-10" db="PDB data bank">
        <title>Molecular basis of recognition of two distinct DNA sequences by a single transcription factor.</title>
        <authorList>
            <person name="Morgunova E."/>
            <person name="Yin Y."/>
            <person name="Jolma A."/>
            <person name="Popov A."/>
            <person name="Taipale J."/>
        </authorList>
    </citation>
    <scope>X-RAY CRYSTALLOGRAPHY (2.19 ANGSTROMS) OF 209-284 IN COMPLEX WITH MEIS2 AND DNA</scope>
    <scope>SUBUNIT</scope>
    <scope>DNA-BINDING</scope>
</reference>
<reference evidence="17 19" key="9">
    <citation type="journal article" date="2017" name="Science">
        <title>Impact of cytosine methylation on DNA binding specificities of human transcription factors.</title>
        <authorList>
            <person name="Yin Y."/>
            <person name="Morgunova E."/>
            <person name="Jolma A."/>
            <person name="Kaasinen E."/>
            <person name="Sahu B."/>
            <person name="Khund-Sayeed S."/>
            <person name="Das P.K."/>
            <person name="Kivioja T."/>
            <person name="Dave K."/>
            <person name="Zhong F."/>
            <person name="Nitta K.R."/>
            <person name="Taipale M."/>
            <person name="Popov A."/>
            <person name="Ginno P.A."/>
            <person name="Domcke S."/>
            <person name="Yan J."/>
            <person name="Schubeler D."/>
            <person name="Vinson C."/>
            <person name="Taipale J."/>
        </authorList>
    </citation>
    <scope>X-RAY CRYSTALLOGRAPHY (2.54 ANGSTROMS) OF 217-278 IN COMPLEX WITH MEIS1 AND METHYLATED DNA</scope>
    <scope>SUBUNIT</scope>
    <scope>DNA-BINDING</scope>
</reference>
<reference key="10">
    <citation type="journal article" date="2002" name="Teratology">
        <title>Complete mutation analysis panel of the 39 human HOX genes.</title>
        <authorList>
            <person name="Kosaki K."/>
            <person name="Kosaki R."/>
            <person name="Suzuki T."/>
            <person name="Yoshihashi H."/>
            <person name="Takahashi T."/>
            <person name="Sasaki K."/>
            <person name="Tomita M."/>
            <person name="McGinnis W."/>
            <person name="Matsuo N."/>
        </authorList>
    </citation>
    <scope>VARIANT MET-41</scope>
</reference>
<reference key="11">
    <citation type="journal article" date="2012" name="Cancer Epidemiol. Biomarkers Prev.">
        <title>Confirmation of the HOXB13 G84E germline mutation in familial prostate cancer.</title>
        <authorList>
            <person name="Breyer J.P."/>
            <person name="Avritt T.G."/>
            <person name="McReynolds K.M."/>
            <person name="Dupont W.D."/>
            <person name="Smith J.R."/>
        </authorList>
    </citation>
    <scope>VARIANT HPC9 GLU-84</scope>
</reference>
<reference key="12">
    <citation type="journal article" date="2012" name="N. Engl. J. Med.">
        <title>Germline mutations in HOXB13 and prostate-cancer risk.</title>
        <authorList>
            <person name="Ewing C.M."/>
            <person name="Ray A.M."/>
            <person name="Lange E.M."/>
            <person name="Zuhlke K.A."/>
            <person name="Robbins C.M."/>
            <person name="Tembe W.D."/>
            <person name="Wiley K.E."/>
            <person name="Isaacs S.D."/>
            <person name="Johng D."/>
            <person name="Wang Y."/>
            <person name="Bizon C."/>
            <person name="Yan G."/>
            <person name="Gielzak M."/>
            <person name="Partin A.W."/>
            <person name="Shanmugam V."/>
            <person name="Izatt T."/>
            <person name="Sinari S."/>
            <person name="Craig D.W."/>
            <person name="Zheng S.L."/>
            <person name="Walsh P.C."/>
            <person name="Montie J.E."/>
            <person name="Xu J."/>
            <person name="Carpten J.D."/>
            <person name="Isaacs W.B."/>
            <person name="Cooney K.A."/>
        </authorList>
    </citation>
    <scope>INVOLVEMENT IN HPC9</scope>
    <scope>VARIANTS HPC9 GLU-84; ASP-88; PRO-144; CYS-216 AND GLY-229</scope>
</reference>
<reference key="13">
    <citation type="journal article" date="2013" name="Cancer Epidemiol. Biomarkers Prev.">
        <title>HOXB13 G84E mutation in Finland: population-based analysis of prostate, breast, and colorectal cancer risk.</title>
        <authorList>
            <person name="Laitinen V.H."/>
            <person name="Wahlfors T."/>
            <person name="Saaristo L."/>
            <person name="Rantapero T."/>
            <person name="Pelttari L.M."/>
            <person name="Kilpivaara O."/>
            <person name="Laasanen S.L."/>
            <person name="Kallioniemi A."/>
            <person name="Nevanlinna H."/>
            <person name="Aaltonen L."/>
            <person name="Vessella R.L."/>
            <person name="Auvinen A."/>
            <person name="Visakorpi T."/>
            <person name="Tammela T.L."/>
            <person name="Schleutker J."/>
        </authorList>
    </citation>
    <scope>INVOLVEMENT IN HPC9</scope>
    <scope>VARIANT HPC9 GLU-84</scope>
</reference>
<reference key="14">
    <citation type="journal article" date="2013" name="Hum. Genet.">
        <title>HOXB13 is a susceptibility gene for prostate cancer: results from the international consortium for prostate cancer genetics (ICPCG).</title>
        <authorList>
            <consortium name="International Consortium for Prostate Cancer Genetics"/>
            <person name="Xu J."/>
            <person name="Lange E.M."/>
            <person name="Lu L."/>
            <person name="Zheng S.L."/>
            <person name="Wang Z."/>
            <person name="Thibodeau S.N."/>
            <person name="Cannon-Albright L.A."/>
            <person name="Teerlink C.C."/>
            <person name="Camp N.J."/>
            <person name="Johnson A.M."/>
            <person name="Zuhlke K.A."/>
            <person name="Stanford J.L."/>
            <person name="Ostrander E.A."/>
            <person name="Wiley K.E."/>
            <person name="Isaacs S.D."/>
            <person name="Walsh P.C."/>
            <person name="Maier C."/>
            <person name="Luedeke M."/>
            <person name="Vogel W."/>
            <person name="Schleutker J."/>
            <person name="Wahlfors T."/>
            <person name="Tammela T."/>
            <person name="Schaid D."/>
            <person name="McDonnell S.K."/>
            <person name="DeRycke M.S."/>
            <person name="Cancel-Tassin G."/>
            <person name="Cussenot O."/>
            <person name="Wiklund F."/>
            <person name="Gronberg H."/>
            <person name="Eeles R."/>
            <person name="Easton D."/>
            <person name="Kote-Jarai Z."/>
            <person name="Whittemore A.S."/>
            <person name="Hsieh C.L."/>
            <person name="Giles G.G."/>
            <person name="Hopper J.L."/>
            <person name="Severi G."/>
            <person name="Catalona W.J."/>
            <person name="Mandal D."/>
            <person name="Ledet E."/>
            <person name="Foulkes W.D."/>
            <person name="Hamel N."/>
            <person name="Mahle L."/>
            <person name="Moller P."/>
            <person name="Powell I."/>
            <person name="Bailey-Wilson J.E."/>
            <person name="Carpten J.D."/>
            <person name="Seminara D."/>
            <person name="Cooney K.A."/>
            <person name="Isaacs W.B."/>
        </authorList>
    </citation>
    <scope>INVOLVEMENT IN HPC9</scope>
    <scope>VARIANT HPC9 GLU-84</scope>
</reference>
<reference key="15">
    <citation type="journal article" date="2015" name="PLoS Genet.">
        <title>Imputation of the Rare HOXB13 G84E Mutation and Cancer Risk in a Large Population-Based Cohort.</title>
        <authorList>
            <person name="Hoffmann T.J."/>
            <person name="Sakoda L.C."/>
            <person name="Shen L."/>
            <person name="Jorgenson E."/>
            <person name="Habel L.A."/>
            <person name="Liu J."/>
            <person name="Kvale M.N."/>
            <person name="Asgari M.M."/>
            <person name="Banda Y."/>
            <person name="Corley D."/>
            <person name="Kushi L.H."/>
            <person name="Quesenberry C.P. Jr."/>
            <person name="Schaefer C."/>
            <person name="Van Den Eeden S.K."/>
            <person name="Risch N."/>
            <person name="Witte J.S."/>
        </authorList>
    </citation>
    <scope>INVOLVEMENT IN HPC9</scope>
    <scope>VARIANT HPC9 GLU-84</scope>
</reference>
<reference key="16">
    <citation type="journal article" date="2016" name="Sci. Rep.">
        <title>Recurrent HOXB13 mutations in the Dutch population do not associate with increased breast cancer risk.</title>
        <authorList>
            <person name="Liu J."/>
            <person name="Prager-van der Smissen W.J."/>
            <person name="Schmidt M.K."/>
            <person name="Collee J.M."/>
            <person name="Cornelissen S."/>
            <person name="Lamping R."/>
            <person name="Nieuwlaat A."/>
            <person name="Foekens J.A."/>
            <person name="Hooning M.J."/>
            <person name="Verhoef S."/>
            <person name="van den Ouweland A.M."/>
            <person name="Hogervorst F.B."/>
            <person name="Martens J.W."/>
            <person name="Hollestelle A."/>
        </authorList>
    </citation>
    <scope>VARIANT HPC9 GLU-84</scope>
    <scope>VARIANT CYS-217</scope>
</reference>
<name>HXB13_HUMAN</name>
<accession>Q92826</accession>
<accession>B2R878</accession>
<accession>Q96QM4</accession>
<accession>Q99810</accession>
<evidence type="ECO:0000255" key="1">
    <source>
        <dbReference type="PROSITE-ProRule" id="PRU00108"/>
    </source>
</evidence>
<evidence type="ECO:0000269" key="2">
    <source>
    </source>
</evidence>
<evidence type="ECO:0000269" key="3">
    <source>
    </source>
</evidence>
<evidence type="ECO:0000269" key="4">
    <source>
    </source>
</evidence>
<evidence type="ECO:0000269" key="5">
    <source>
    </source>
</evidence>
<evidence type="ECO:0000269" key="6">
    <source>
    </source>
</evidence>
<evidence type="ECO:0000269" key="7">
    <source>
    </source>
</evidence>
<evidence type="ECO:0000269" key="8">
    <source>
    </source>
</evidence>
<evidence type="ECO:0000269" key="9">
    <source>
    </source>
</evidence>
<evidence type="ECO:0000269" key="10">
    <source ref="8"/>
</evidence>
<evidence type="ECO:0000305" key="11"/>
<evidence type="ECO:0000305" key="12">
    <source>
    </source>
</evidence>
<evidence type="ECO:0000305" key="13">
    <source ref="8"/>
</evidence>
<evidence type="ECO:0007744" key="14">
    <source>
        <dbReference type="PDB" id="2CRA"/>
    </source>
</evidence>
<evidence type="ECO:0007744" key="15">
    <source>
        <dbReference type="PDB" id="5EDN"/>
    </source>
</evidence>
<evidence type="ECO:0007744" key="16">
    <source>
        <dbReference type="PDB" id="5EEA"/>
    </source>
</evidence>
<evidence type="ECO:0007744" key="17">
    <source>
        <dbReference type="PDB" id="5EF6"/>
    </source>
</evidence>
<evidence type="ECO:0007744" key="18">
    <source>
        <dbReference type="PDB" id="5EG0"/>
    </source>
</evidence>
<evidence type="ECO:0007744" key="19">
    <source>
        <dbReference type="PDB" id="5EGO"/>
    </source>
</evidence>
<evidence type="ECO:0007829" key="20">
    <source>
        <dbReference type="PDB" id="7PSX"/>
    </source>
</evidence>
<dbReference type="EMBL" id="U57052">
    <property type="protein sequence ID" value="AAC50664.1"/>
    <property type="molecule type" value="mRNA"/>
</dbReference>
<dbReference type="EMBL" id="U81599">
    <property type="protein sequence ID" value="AAB39863.1"/>
    <property type="molecule type" value="mRNA"/>
</dbReference>
<dbReference type="EMBL" id="BT007410">
    <property type="protein sequence ID" value="AAP36078.1"/>
    <property type="molecule type" value="mRNA"/>
</dbReference>
<dbReference type="EMBL" id="AK313266">
    <property type="protein sequence ID" value="BAG36075.1"/>
    <property type="molecule type" value="mRNA"/>
</dbReference>
<dbReference type="EMBL" id="CH471109">
    <property type="protein sequence ID" value="EAW94714.1"/>
    <property type="molecule type" value="Genomic_DNA"/>
</dbReference>
<dbReference type="EMBL" id="BC007092">
    <property type="protein sequence ID" value="AAH07092.1"/>
    <property type="molecule type" value="mRNA"/>
</dbReference>
<dbReference type="EMBL" id="BC070233">
    <property type="protein sequence ID" value="AAH70233.1"/>
    <property type="molecule type" value="mRNA"/>
</dbReference>
<dbReference type="CCDS" id="CCDS11536.1"/>
<dbReference type="RefSeq" id="NP_006352.2">
    <property type="nucleotide sequence ID" value="NM_006361.6"/>
</dbReference>
<dbReference type="PDB" id="2CRA">
    <property type="method" value="NMR"/>
    <property type="chains" value="A=217-273"/>
</dbReference>
<dbReference type="PDB" id="5EDN">
    <property type="method" value="X-ray"/>
    <property type="resolution" value="3.20 A"/>
    <property type="chains" value="A/B/G/J=209-284"/>
</dbReference>
<dbReference type="PDB" id="5EEA">
    <property type="method" value="X-ray"/>
    <property type="resolution" value="2.19 A"/>
    <property type="chains" value="A/B/G/J=217-279"/>
</dbReference>
<dbReference type="PDB" id="5EF6">
    <property type="method" value="X-ray"/>
    <property type="resolution" value="3.00 A"/>
    <property type="chains" value="A/B/G/J=217-278"/>
</dbReference>
<dbReference type="PDB" id="5EG0">
    <property type="method" value="X-ray"/>
    <property type="resolution" value="3.10 A"/>
    <property type="chains" value="B=217-277"/>
</dbReference>
<dbReference type="PDB" id="5EGO">
    <property type="method" value="X-ray"/>
    <property type="resolution" value="2.54 A"/>
    <property type="chains" value="B=217-277"/>
</dbReference>
<dbReference type="PDB" id="5NO6">
    <property type="method" value="X-ray"/>
    <property type="resolution" value="2.88 A"/>
    <property type="chains" value="A/B=217-278"/>
</dbReference>
<dbReference type="PDB" id="7PSX">
    <property type="method" value="X-ray"/>
    <property type="resolution" value="2.00 A"/>
    <property type="chains" value="A/B/G/J=217-277"/>
</dbReference>
<dbReference type="PDB" id="8BYX">
    <property type="method" value="X-ray"/>
    <property type="resolution" value="3.00 A"/>
    <property type="chains" value="A/B/G/J/K/L=216-278"/>
</dbReference>
<dbReference type="PDBsum" id="2CRA"/>
<dbReference type="PDBsum" id="5EDN"/>
<dbReference type="PDBsum" id="5EEA"/>
<dbReference type="PDBsum" id="5EF6"/>
<dbReference type="PDBsum" id="5EG0"/>
<dbReference type="PDBsum" id="5EGO"/>
<dbReference type="PDBsum" id="5NO6"/>
<dbReference type="PDBsum" id="7PSX"/>
<dbReference type="PDBsum" id="8BYX"/>
<dbReference type="SMR" id="Q92826"/>
<dbReference type="BioGRID" id="115744">
    <property type="interactions" value="24"/>
</dbReference>
<dbReference type="CORUM" id="Q92826"/>
<dbReference type="FunCoup" id="Q92826">
    <property type="interactions" value="517"/>
</dbReference>
<dbReference type="IntAct" id="Q92826">
    <property type="interactions" value="17"/>
</dbReference>
<dbReference type="MINT" id="Q92826"/>
<dbReference type="STRING" id="9606.ENSP00000290295"/>
<dbReference type="GlyGen" id="Q92826">
    <property type="glycosylation" value="1 site"/>
</dbReference>
<dbReference type="iPTMnet" id="Q92826"/>
<dbReference type="PhosphoSitePlus" id="Q92826"/>
<dbReference type="SwissPalm" id="Q92826"/>
<dbReference type="BioMuta" id="HOXB13"/>
<dbReference type="DMDM" id="50403792"/>
<dbReference type="jPOST" id="Q92826"/>
<dbReference type="MassIVE" id="Q92826"/>
<dbReference type="PaxDb" id="9606-ENSP00000290295"/>
<dbReference type="PeptideAtlas" id="Q92826"/>
<dbReference type="ProteomicsDB" id="75504"/>
<dbReference type="Antibodypedia" id="3837">
    <property type="antibodies" value="259 antibodies from 28 providers"/>
</dbReference>
<dbReference type="DNASU" id="10481"/>
<dbReference type="Ensembl" id="ENST00000290295.8">
    <property type="protein sequence ID" value="ENSP00000290295.8"/>
    <property type="gene ID" value="ENSG00000159184.8"/>
</dbReference>
<dbReference type="GeneID" id="10481"/>
<dbReference type="KEGG" id="hsa:10481"/>
<dbReference type="MANE-Select" id="ENST00000290295.8">
    <property type="protein sequence ID" value="ENSP00000290295.8"/>
    <property type="RefSeq nucleotide sequence ID" value="NM_006361.6"/>
    <property type="RefSeq protein sequence ID" value="NP_006352.2"/>
</dbReference>
<dbReference type="UCSC" id="uc002ioa.4">
    <property type="organism name" value="human"/>
</dbReference>
<dbReference type="AGR" id="HGNC:5112"/>
<dbReference type="CTD" id="10481"/>
<dbReference type="DisGeNET" id="10481"/>
<dbReference type="GeneCards" id="HOXB13"/>
<dbReference type="HGNC" id="HGNC:5112">
    <property type="gene designation" value="HOXB13"/>
</dbReference>
<dbReference type="HPA" id="ENSG00000159184">
    <property type="expression patterns" value="Group enriched (intestine, prostate)"/>
</dbReference>
<dbReference type="MalaCards" id="HOXB13"/>
<dbReference type="MIM" id="604607">
    <property type="type" value="gene"/>
</dbReference>
<dbReference type="MIM" id="610997">
    <property type="type" value="phenotype"/>
</dbReference>
<dbReference type="neXtProt" id="NX_Q92826"/>
<dbReference type="OpenTargets" id="ENSG00000159184"/>
<dbReference type="Orphanet" id="1331">
    <property type="disease" value="Familial prostate cancer"/>
</dbReference>
<dbReference type="PharmGKB" id="PA29388"/>
<dbReference type="VEuPathDB" id="HostDB:ENSG00000159184"/>
<dbReference type="eggNOG" id="KOG0487">
    <property type="taxonomic scope" value="Eukaryota"/>
</dbReference>
<dbReference type="GeneTree" id="ENSGT00940000159029"/>
<dbReference type="HOGENOM" id="CLU_059940_1_0_1"/>
<dbReference type="InParanoid" id="Q92826"/>
<dbReference type="OMA" id="HPPDGCA"/>
<dbReference type="OrthoDB" id="6159439at2759"/>
<dbReference type="PAN-GO" id="Q92826">
    <property type="GO annotations" value="3 GO annotations based on evolutionary models"/>
</dbReference>
<dbReference type="PhylomeDB" id="Q92826"/>
<dbReference type="TreeFam" id="TF330813"/>
<dbReference type="PathwayCommons" id="Q92826"/>
<dbReference type="SignaLink" id="Q92826"/>
<dbReference type="SIGNOR" id="Q92826"/>
<dbReference type="BioGRID-ORCS" id="10481">
    <property type="hits" value="35 hits in 1172 CRISPR screens"/>
</dbReference>
<dbReference type="ChiTaRS" id="HOXB13">
    <property type="organism name" value="human"/>
</dbReference>
<dbReference type="EvolutionaryTrace" id="Q92826"/>
<dbReference type="GeneWiki" id="HOXB13"/>
<dbReference type="GenomeRNAi" id="10481"/>
<dbReference type="Pharos" id="Q92826">
    <property type="development level" value="Tbio"/>
</dbReference>
<dbReference type="PRO" id="PR:Q92826"/>
<dbReference type="Proteomes" id="UP000005640">
    <property type="component" value="Chromosome 17"/>
</dbReference>
<dbReference type="RNAct" id="Q92826">
    <property type="molecule type" value="protein"/>
</dbReference>
<dbReference type="Bgee" id="ENSG00000159184">
    <property type="expression patterns" value="Expressed in rectum and 22 other cell types or tissues"/>
</dbReference>
<dbReference type="GO" id="GO:0000785">
    <property type="term" value="C:chromatin"/>
    <property type="evidence" value="ECO:0000247"/>
    <property type="project" value="NTNU_SB"/>
</dbReference>
<dbReference type="GO" id="GO:0005654">
    <property type="term" value="C:nucleoplasm"/>
    <property type="evidence" value="ECO:0000314"/>
    <property type="project" value="HPA"/>
</dbReference>
<dbReference type="GO" id="GO:0005667">
    <property type="term" value="C:transcription regulator complex"/>
    <property type="evidence" value="ECO:0007669"/>
    <property type="project" value="Ensembl"/>
</dbReference>
<dbReference type="GO" id="GO:0000981">
    <property type="term" value="F:DNA-binding transcription factor activity, RNA polymerase II-specific"/>
    <property type="evidence" value="ECO:0000247"/>
    <property type="project" value="NTNU_SB"/>
</dbReference>
<dbReference type="GO" id="GO:0001227">
    <property type="term" value="F:DNA-binding transcription repressor activity, RNA polymerase II-specific"/>
    <property type="evidence" value="ECO:0000314"/>
    <property type="project" value="NTNU_SB"/>
</dbReference>
<dbReference type="GO" id="GO:0008327">
    <property type="term" value="F:methyl-CpG binding"/>
    <property type="evidence" value="ECO:0000314"/>
    <property type="project" value="UniProtKB"/>
</dbReference>
<dbReference type="GO" id="GO:0000978">
    <property type="term" value="F:RNA polymerase II cis-regulatory region sequence-specific DNA binding"/>
    <property type="evidence" value="ECO:0000318"/>
    <property type="project" value="GO_Central"/>
</dbReference>
<dbReference type="GO" id="GO:0043565">
    <property type="term" value="F:sequence-specific DNA binding"/>
    <property type="evidence" value="ECO:0000314"/>
    <property type="project" value="NTNU_SB"/>
</dbReference>
<dbReference type="GO" id="GO:1990837">
    <property type="term" value="F:sequence-specific double-stranded DNA binding"/>
    <property type="evidence" value="ECO:0000314"/>
    <property type="project" value="ARUK-UCL"/>
</dbReference>
<dbReference type="GO" id="GO:0001525">
    <property type="term" value="P:angiogenesis"/>
    <property type="evidence" value="ECO:0000270"/>
    <property type="project" value="UniProtKB"/>
</dbReference>
<dbReference type="GO" id="GO:0008544">
    <property type="term" value="P:epidermis development"/>
    <property type="evidence" value="ECO:0000304"/>
    <property type="project" value="ProtInc"/>
</dbReference>
<dbReference type="GO" id="GO:0060743">
    <property type="term" value="P:epithelial cell maturation involved in prostate gland development"/>
    <property type="evidence" value="ECO:0007669"/>
    <property type="project" value="Ensembl"/>
</dbReference>
<dbReference type="GO" id="GO:0000122">
    <property type="term" value="P:negative regulation of transcription by RNA polymerase II"/>
    <property type="evidence" value="ECO:0000314"/>
    <property type="project" value="NTNU_SB"/>
</dbReference>
<dbReference type="GO" id="GO:0060527">
    <property type="term" value="P:prostate epithelial cord arborization involved in prostate glandular acinus morphogenesis"/>
    <property type="evidence" value="ECO:0007669"/>
    <property type="project" value="Ensembl"/>
</dbReference>
<dbReference type="GO" id="GO:0040008">
    <property type="term" value="P:regulation of growth"/>
    <property type="evidence" value="ECO:0007669"/>
    <property type="project" value="Ensembl"/>
</dbReference>
<dbReference type="GO" id="GO:0006357">
    <property type="term" value="P:regulation of transcription by RNA polymerase II"/>
    <property type="evidence" value="ECO:0000318"/>
    <property type="project" value="GO_Central"/>
</dbReference>
<dbReference type="GO" id="GO:0033574">
    <property type="term" value="P:response to testosterone"/>
    <property type="evidence" value="ECO:0007669"/>
    <property type="project" value="Ensembl"/>
</dbReference>
<dbReference type="GO" id="GO:0009611">
    <property type="term" value="P:response to wounding"/>
    <property type="evidence" value="ECO:0000304"/>
    <property type="project" value="ProtInc"/>
</dbReference>
<dbReference type="CDD" id="cd00086">
    <property type="entry name" value="homeodomain"/>
    <property type="match status" value="1"/>
</dbReference>
<dbReference type="FunFam" id="1.10.10.60:FF:000084">
    <property type="entry name" value="Homeobox protein Hox-D13"/>
    <property type="match status" value="1"/>
</dbReference>
<dbReference type="Gene3D" id="1.10.10.60">
    <property type="entry name" value="Homeodomain-like"/>
    <property type="match status" value="1"/>
</dbReference>
<dbReference type="InterPro" id="IPR051003">
    <property type="entry name" value="AP_axis_regulatory_Homeobox"/>
</dbReference>
<dbReference type="InterPro" id="IPR001356">
    <property type="entry name" value="HD"/>
</dbReference>
<dbReference type="InterPro" id="IPR017970">
    <property type="entry name" value="Homeobox_CS"/>
</dbReference>
<dbReference type="InterPro" id="IPR009057">
    <property type="entry name" value="Homeodomain-like_sf"/>
</dbReference>
<dbReference type="InterPro" id="IPR022067">
    <property type="entry name" value="HoxA13_N"/>
</dbReference>
<dbReference type="PANTHER" id="PTHR45804:SF6">
    <property type="entry name" value="HOMEOBOX PROTEIN HOX-B13"/>
    <property type="match status" value="1"/>
</dbReference>
<dbReference type="PANTHER" id="PTHR45804">
    <property type="entry name" value="SEGMENTATION PROTEIN FUSHI TARAZU-LIKE PROTEIN"/>
    <property type="match status" value="1"/>
</dbReference>
<dbReference type="Pfam" id="PF00046">
    <property type="entry name" value="Homeodomain"/>
    <property type="match status" value="1"/>
</dbReference>
<dbReference type="Pfam" id="PF12284">
    <property type="entry name" value="HoxA13_N"/>
    <property type="match status" value="1"/>
</dbReference>
<dbReference type="SMART" id="SM00389">
    <property type="entry name" value="HOX"/>
    <property type="match status" value="1"/>
</dbReference>
<dbReference type="SUPFAM" id="SSF46689">
    <property type="entry name" value="Homeodomain-like"/>
    <property type="match status" value="1"/>
</dbReference>
<dbReference type="PROSITE" id="PS00027">
    <property type="entry name" value="HOMEOBOX_1"/>
    <property type="match status" value="1"/>
</dbReference>
<dbReference type="PROSITE" id="PS50071">
    <property type="entry name" value="HOMEOBOX_2"/>
    <property type="match status" value="1"/>
</dbReference>
<proteinExistence type="evidence at protein level"/>
<protein>
    <recommendedName>
        <fullName>Homeobox protein Hox-B13</fullName>
    </recommendedName>
</protein>
<sequence>MEPGNYATLDGAKDIEGLLGAGGGRNLVAHSPLTSHPAAPTLMPAVNYAPLDLPGSAEPPKQCHPCPGVPQGTSPAPVPYGYFGGGYYSCRVSRSSLKPCAQAATLAAYPAETPTAGEEYPSRPTEFAFYPGYPGTYQPMASYLDVSVVQTLGAPGEPRHDSLLPVDSYQSWALAGGWNSQMCCQGEQNPPGPFWKAAFADSSGQHPPDACAFRRGRKKRIPYSKGQLRELEREYAANKFITKDKRRKISAATSLSERQITIWFQNRRVKEKKVLAKVKNSATP</sequence>
<organism>
    <name type="scientific">Homo sapiens</name>
    <name type="common">Human</name>
    <dbReference type="NCBI Taxonomy" id="9606"/>
    <lineage>
        <taxon>Eukaryota</taxon>
        <taxon>Metazoa</taxon>
        <taxon>Chordata</taxon>
        <taxon>Craniata</taxon>
        <taxon>Vertebrata</taxon>
        <taxon>Euteleostomi</taxon>
        <taxon>Mammalia</taxon>
        <taxon>Eutheria</taxon>
        <taxon>Euarchontoglires</taxon>
        <taxon>Primates</taxon>
        <taxon>Haplorrhini</taxon>
        <taxon>Catarrhini</taxon>
        <taxon>Hominidae</taxon>
        <taxon>Homo</taxon>
    </lineage>
</organism>
<comment type="function">
    <text evidence="9">Sequence-specific transcription factor which is part of a developmental regulatory system that provides cells with specific positional identities on the anterior-posterior axis. Binds preferentially to methylated DNA (PubMed:28473536).</text>
</comment>
<comment type="subunit">
    <text evidence="9 10">Heterodimer with MEIS1 (PubMed:28473536). Heterodimer with MEIS2 (Ref.8).</text>
</comment>
<comment type="interaction">
    <interactant intactId="EBI-11317274">
        <id>Q92826</id>
    </interactant>
    <interactant intactId="EBI-399080">
        <id>Q92993</id>
        <label>KAT5</label>
    </interactant>
    <organismsDiffer>false</organismsDiffer>
    <experiments>3</experiments>
</comment>
<comment type="interaction">
    <interactant intactId="EBI-11317274">
        <id>Q92826</id>
    </interactant>
    <interactant intactId="EBI-11742507">
        <id>Q8TAP4-4</id>
        <label>LMO3</label>
    </interactant>
    <organismsDiffer>false</organismsDiffer>
    <experiments>3</experiments>
</comment>
<comment type="interaction">
    <interactant intactId="EBI-11317274">
        <id>Q92826</id>
    </interactant>
    <interactant intactId="EBI-1383528">
        <id>P17252</id>
        <label>PRKCA</label>
    </interactant>
    <organismsDiffer>false</organismsDiffer>
    <experiments>3</experiments>
</comment>
<comment type="interaction">
    <interactant intactId="EBI-11317274">
        <id>Q92826</id>
    </interactant>
    <interactant intactId="EBI-9090795">
        <id>Q15047-2</id>
        <label>SETDB1</label>
    </interactant>
    <organismsDiffer>false</organismsDiffer>
    <experiments>3</experiments>
</comment>
<comment type="interaction">
    <interactant intactId="EBI-11317274">
        <id>Q92826</id>
    </interactant>
    <interactant intactId="EBI-359832">
        <id>P61981</id>
        <label>YWHAG</label>
    </interactant>
    <organismsDiffer>false</organismsDiffer>
    <experiments>3</experiments>
</comment>
<comment type="subcellular location">
    <subcellularLocation>
        <location>Nucleus</location>
    </subcellularLocation>
</comment>
<comment type="disease" evidence="3 4 5 6 7 8">
    <disease id="DI-06719">
        <name>Prostate cancer, hereditary, 9</name>
        <acronym>HPC9</acronym>
        <description>A condition associated with familial predisposition to cancer of the prostate. Most prostate cancers are adenocarcinomas that develop in the acini of the prostatic ducts. Other rare histopathologic types of prostate cancer that occur in approximately 5% of patients include small cell carcinoma, mucinous carcinoma, prostatic ductal carcinoma, transitional cell carcinoma, squamous cell carcinoma, basal cell carcinoma, adenoid cystic carcinoma (basaloid), signet-ring cell carcinoma and neuroendocrine carcinoma.</description>
        <dbReference type="MIM" id="610997"/>
    </disease>
    <text>Disease susceptibility is associated with variants affecting the gene represented in this entry.</text>
</comment>
<comment type="similarity">
    <text evidence="11">Belongs to the Abd-B homeobox family.</text>
</comment>
<feature type="chain" id="PRO_0000200160" description="Homeobox protein Hox-B13">
    <location>
        <begin position="1"/>
        <end position="284"/>
    </location>
</feature>
<feature type="DNA-binding region" description="Homeobox" evidence="1">
    <location>
        <begin position="216"/>
        <end position="275"/>
    </location>
</feature>
<feature type="region of interest" description="Interaction with DNA" evidence="12 13">
    <location>
        <begin position="217"/>
        <end position="246"/>
    </location>
</feature>
<feature type="region of interest" description="Interaction with 5-mCpG DNA" evidence="12">
    <location>
        <begin position="258"/>
        <end position="269"/>
    </location>
</feature>
<feature type="region of interest" description="Interaction with DNA" evidence="12 13">
    <location>
        <begin position="270"/>
        <end position="273"/>
    </location>
</feature>
<feature type="sequence variant" id="VAR_031849" description="In dbSNP:rs199799743." evidence="2">
    <original>T</original>
    <variation>M</variation>
    <location>
        <position position="41"/>
    </location>
</feature>
<feature type="sequence variant" id="VAR_071866" description="In HPC9; dbSNP:rs138213197." evidence="3 4 5 6 7 8">
    <original>G</original>
    <variation>E</variation>
    <location>
        <position position="84"/>
    </location>
</feature>
<feature type="sequence variant" id="VAR_071867" description="In HPC9; uncertain significance." evidence="3">
    <original>Y</original>
    <variation>D</variation>
    <location>
        <position position="88"/>
    </location>
</feature>
<feature type="sequence variant" id="VAR_071868" description="In HPC9; uncertain significance." evidence="3">
    <original>L</original>
    <variation>P</variation>
    <location>
        <position position="144"/>
    </location>
</feature>
<feature type="sequence variant" id="VAR_071869" description="In HPC9; uncertain significance; dbSNP:rs375917549." evidence="3">
    <original>G</original>
    <variation>C</variation>
    <location>
        <position position="216"/>
    </location>
</feature>
<feature type="sequence variant" id="VAR_077246" description="In dbSNP:rs139475791." evidence="8">
    <original>R</original>
    <variation>C</variation>
    <location>
        <position position="217"/>
    </location>
</feature>
<feature type="sequence variant" id="VAR_071870" description="In HPC9; uncertain significance; dbSNP:rs529100627." evidence="3">
    <original>R</original>
    <variation>G</variation>
    <location>
        <position position="229"/>
    </location>
</feature>
<feature type="sequence conflict" description="In Ref. 1 and 2." evidence="11" ref="1 2">
    <original>QP</original>
    <variation>HA</variation>
    <location>
        <begin position="138"/>
        <end position="139"/>
    </location>
</feature>
<feature type="sequence conflict" description="In Ref. 1; AAC50664." evidence="11" ref="1">
    <original>C</original>
    <variation>S</variation>
    <location>
        <position position="211"/>
    </location>
</feature>
<feature type="helix" evidence="20">
    <location>
        <begin position="225"/>
        <end position="237"/>
    </location>
</feature>
<feature type="helix" evidence="20">
    <location>
        <begin position="243"/>
        <end position="253"/>
    </location>
</feature>
<feature type="helix" evidence="20">
    <location>
        <begin position="257"/>
        <end position="274"/>
    </location>
</feature>